<comment type="function">
    <text evidence="1">Is required not only for elongation of protein synthesis but also for the initiation of all mRNA translation through initiator tRNA(fMet) aminoacylation.</text>
</comment>
<comment type="catalytic activity">
    <reaction>
        <text>tRNA(Met) + L-methionine + ATP = L-methionyl-tRNA(Met) + AMP + diphosphate</text>
        <dbReference type="Rhea" id="RHEA:13481"/>
        <dbReference type="Rhea" id="RHEA-COMP:9667"/>
        <dbReference type="Rhea" id="RHEA-COMP:9698"/>
        <dbReference type="ChEBI" id="CHEBI:30616"/>
        <dbReference type="ChEBI" id="CHEBI:33019"/>
        <dbReference type="ChEBI" id="CHEBI:57844"/>
        <dbReference type="ChEBI" id="CHEBI:78442"/>
        <dbReference type="ChEBI" id="CHEBI:78530"/>
        <dbReference type="ChEBI" id="CHEBI:456215"/>
        <dbReference type="EC" id="6.1.1.10"/>
    </reaction>
</comment>
<comment type="cofactor">
    <cofactor evidence="1">
        <name>Zn(2+)</name>
        <dbReference type="ChEBI" id="CHEBI:29105"/>
    </cofactor>
    <text evidence="1">Binds 1 zinc ion per subunit.</text>
</comment>
<comment type="subunit">
    <text evidence="1">Homodimer.</text>
</comment>
<comment type="subcellular location">
    <subcellularLocation>
        <location evidence="1">Cytoplasm</location>
    </subcellularLocation>
</comment>
<comment type="similarity">
    <text evidence="2">Belongs to the class-I aminoacyl-tRNA synthetase family. MetG type 2A subfamily.</text>
</comment>
<accession>Q8XHG1</accession>
<sequence length="645" mass="73174">MCKKPYYITTPIYYPSTNLHIGNTYTTVAADAIARFKRLTGHEVMFLTGTDEHGQKIERIANEKGITPKEHVDEIVAGIKDLWKMMNISYDKFIRTTDDYHVKAVQEIFKKLYDQGDIYKDSYEGLYCTPCESFWTETQLVNGNCPDCGRPVEKAKEEAYFFKMSKYADRLIQYIEEHPDFIQPESRKNEMLNNFLRPGLQDLCVSRTSFTWGIPVSFDEKHVIYVWIDALSNYITALGYGQENQELYKKFWPADVHLIGKDILRFHTIYWPIMLMALGLELPKQVFGHGWLLVDGGKMSKSKGNVVDPVVLVNMFGADAVRYYLLREIPFGSDGLFNNEIFIKKVNTDLANDLGNLLSRTIAMVYKYFGGVIQAPTCKEPIDDELINLALSTPGKVEASIDALKIPEALESIWTLISRANKYIDETTPWILAKDEEKKERLGTVLYNLLETLRFVSVMISPFLTETSVKINAQLNTKVTTWESLKEFNGTVAGDKVVKGDVIFPRIDVEEKLAELEALKPAPVKPANEELVENPIKEEITIDDFDKIDLRVVKVLECEPVKKAKKLLKLKVDLGGEERQVISGIAQYYKPEELVGKYVVLVANLKPVKLRGELSQGMILAAAPSDDSELLLVNPGEMLTGSQVR</sequence>
<reference key="1">
    <citation type="journal article" date="2002" name="Proc. Natl. Acad. Sci. U.S.A.">
        <title>Complete genome sequence of Clostridium perfringens, an anaerobic flesh-eater.</title>
        <authorList>
            <person name="Shimizu T."/>
            <person name="Ohtani K."/>
            <person name="Hirakawa H."/>
            <person name="Ohshima K."/>
            <person name="Yamashita A."/>
            <person name="Shiba T."/>
            <person name="Ogasawara N."/>
            <person name="Hattori M."/>
            <person name="Kuhara S."/>
            <person name="Hayashi H."/>
        </authorList>
    </citation>
    <scope>NUCLEOTIDE SEQUENCE [LARGE SCALE GENOMIC DNA]</scope>
    <source>
        <strain>13 / Type A</strain>
    </source>
</reference>
<feature type="chain" id="PRO_0000139216" description="Methionine--tRNA ligase">
    <location>
        <begin position="1"/>
        <end position="645"/>
    </location>
</feature>
<feature type="domain" description="tRNA-binding">
    <location>
        <begin position="544"/>
        <end position="645"/>
    </location>
</feature>
<feature type="short sequence motif" description="'HIGH' region">
    <location>
        <begin position="13"/>
        <end position="23"/>
    </location>
</feature>
<feature type="short sequence motif" description="'KMSKS' region">
    <location>
        <begin position="298"/>
        <end position="302"/>
    </location>
</feature>
<feature type="binding site" evidence="1">
    <location>
        <position position="128"/>
    </location>
    <ligand>
        <name>Zn(2+)</name>
        <dbReference type="ChEBI" id="CHEBI:29105"/>
    </ligand>
</feature>
<feature type="binding site" evidence="1">
    <location>
        <position position="131"/>
    </location>
    <ligand>
        <name>Zn(2+)</name>
        <dbReference type="ChEBI" id="CHEBI:29105"/>
    </ligand>
</feature>
<feature type="binding site" evidence="1">
    <location>
        <position position="145"/>
    </location>
    <ligand>
        <name>Zn(2+)</name>
        <dbReference type="ChEBI" id="CHEBI:29105"/>
    </ligand>
</feature>
<feature type="binding site" evidence="1">
    <location>
        <position position="148"/>
    </location>
    <ligand>
        <name>Zn(2+)</name>
        <dbReference type="ChEBI" id="CHEBI:29105"/>
    </ligand>
</feature>
<feature type="binding site" evidence="1">
    <location>
        <position position="301"/>
    </location>
    <ligand>
        <name>ATP</name>
        <dbReference type="ChEBI" id="CHEBI:30616"/>
    </ligand>
</feature>
<gene>
    <name type="primary">metG</name>
    <name type="synonym">metS</name>
    <name type="ordered locus">CPE2524</name>
</gene>
<organism>
    <name type="scientific">Clostridium perfringens (strain 13 / Type A)</name>
    <dbReference type="NCBI Taxonomy" id="195102"/>
    <lineage>
        <taxon>Bacteria</taxon>
        <taxon>Bacillati</taxon>
        <taxon>Bacillota</taxon>
        <taxon>Clostridia</taxon>
        <taxon>Eubacteriales</taxon>
        <taxon>Clostridiaceae</taxon>
        <taxon>Clostridium</taxon>
    </lineage>
</organism>
<keyword id="KW-0030">Aminoacyl-tRNA synthetase</keyword>
<keyword id="KW-0067">ATP-binding</keyword>
<keyword id="KW-0963">Cytoplasm</keyword>
<keyword id="KW-0436">Ligase</keyword>
<keyword id="KW-0479">Metal-binding</keyword>
<keyword id="KW-0547">Nucleotide-binding</keyword>
<keyword id="KW-0648">Protein biosynthesis</keyword>
<keyword id="KW-1185">Reference proteome</keyword>
<keyword id="KW-0694">RNA-binding</keyword>
<keyword id="KW-0820">tRNA-binding</keyword>
<keyword id="KW-0862">Zinc</keyword>
<proteinExistence type="inferred from homology"/>
<name>SYM_CLOPE</name>
<dbReference type="EC" id="6.1.1.10"/>
<dbReference type="EMBL" id="BA000016">
    <property type="protein sequence ID" value="BAB82230.1"/>
    <property type="molecule type" value="Genomic_DNA"/>
</dbReference>
<dbReference type="RefSeq" id="WP_011010945.1">
    <property type="nucleotide sequence ID" value="NC_003366.1"/>
</dbReference>
<dbReference type="SMR" id="Q8XHG1"/>
<dbReference type="STRING" id="195102.gene:10491858"/>
<dbReference type="KEGG" id="cpe:CPE2524"/>
<dbReference type="HOGENOM" id="CLU_009710_9_4_9"/>
<dbReference type="Proteomes" id="UP000000818">
    <property type="component" value="Chromosome"/>
</dbReference>
<dbReference type="GO" id="GO:0005737">
    <property type="term" value="C:cytoplasm"/>
    <property type="evidence" value="ECO:0007669"/>
    <property type="project" value="UniProtKB-SubCell"/>
</dbReference>
<dbReference type="GO" id="GO:0005524">
    <property type="term" value="F:ATP binding"/>
    <property type="evidence" value="ECO:0007669"/>
    <property type="project" value="UniProtKB-UniRule"/>
</dbReference>
<dbReference type="GO" id="GO:0046872">
    <property type="term" value="F:metal ion binding"/>
    <property type="evidence" value="ECO:0007669"/>
    <property type="project" value="UniProtKB-KW"/>
</dbReference>
<dbReference type="GO" id="GO:0004825">
    <property type="term" value="F:methionine-tRNA ligase activity"/>
    <property type="evidence" value="ECO:0007669"/>
    <property type="project" value="UniProtKB-UniRule"/>
</dbReference>
<dbReference type="GO" id="GO:0000049">
    <property type="term" value="F:tRNA binding"/>
    <property type="evidence" value="ECO:0007669"/>
    <property type="project" value="UniProtKB-KW"/>
</dbReference>
<dbReference type="GO" id="GO:0006431">
    <property type="term" value="P:methionyl-tRNA aminoacylation"/>
    <property type="evidence" value="ECO:0007669"/>
    <property type="project" value="UniProtKB-UniRule"/>
</dbReference>
<dbReference type="CDD" id="cd07957">
    <property type="entry name" value="Anticodon_Ia_Met"/>
    <property type="match status" value="1"/>
</dbReference>
<dbReference type="CDD" id="cd00814">
    <property type="entry name" value="MetRS_core"/>
    <property type="match status" value="1"/>
</dbReference>
<dbReference type="CDD" id="cd02800">
    <property type="entry name" value="tRNA_bind_EcMetRS_like"/>
    <property type="match status" value="1"/>
</dbReference>
<dbReference type="FunFam" id="1.10.730.10:FF:000026">
    <property type="entry name" value="Methionine--tRNA ligase"/>
    <property type="match status" value="1"/>
</dbReference>
<dbReference type="FunFam" id="2.170.220.10:FF:000002">
    <property type="entry name" value="Methionine--tRNA ligase"/>
    <property type="match status" value="1"/>
</dbReference>
<dbReference type="FunFam" id="2.40.50.140:FF:000042">
    <property type="entry name" value="Methionine--tRNA ligase"/>
    <property type="match status" value="1"/>
</dbReference>
<dbReference type="Gene3D" id="2.170.220.10">
    <property type="match status" value="1"/>
</dbReference>
<dbReference type="Gene3D" id="3.40.50.620">
    <property type="entry name" value="HUPs"/>
    <property type="match status" value="1"/>
</dbReference>
<dbReference type="Gene3D" id="1.10.730.10">
    <property type="entry name" value="Isoleucyl-tRNA Synthetase, Domain 1"/>
    <property type="match status" value="1"/>
</dbReference>
<dbReference type="Gene3D" id="2.40.50.140">
    <property type="entry name" value="Nucleic acid-binding proteins"/>
    <property type="match status" value="1"/>
</dbReference>
<dbReference type="HAMAP" id="MF_01228">
    <property type="entry name" value="Met_tRNA_synth_type2"/>
    <property type="match status" value="1"/>
</dbReference>
<dbReference type="InterPro" id="IPR041872">
    <property type="entry name" value="Anticodon_Met"/>
</dbReference>
<dbReference type="InterPro" id="IPR004495">
    <property type="entry name" value="Met-tRNA-synth_bsu_C"/>
</dbReference>
<dbReference type="InterPro" id="IPR014758">
    <property type="entry name" value="Met-tRNA_synth"/>
</dbReference>
<dbReference type="InterPro" id="IPR023457">
    <property type="entry name" value="Met-tRNA_synth_2"/>
</dbReference>
<dbReference type="InterPro" id="IPR015413">
    <property type="entry name" value="Methionyl/Leucyl_tRNA_Synth"/>
</dbReference>
<dbReference type="InterPro" id="IPR033911">
    <property type="entry name" value="MetRS_core"/>
</dbReference>
<dbReference type="InterPro" id="IPR012340">
    <property type="entry name" value="NA-bd_OB-fold"/>
</dbReference>
<dbReference type="InterPro" id="IPR014729">
    <property type="entry name" value="Rossmann-like_a/b/a_fold"/>
</dbReference>
<dbReference type="InterPro" id="IPR002547">
    <property type="entry name" value="tRNA-bd_dom"/>
</dbReference>
<dbReference type="InterPro" id="IPR032678">
    <property type="entry name" value="tRNA-synt_1_cat_dom"/>
</dbReference>
<dbReference type="InterPro" id="IPR009080">
    <property type="entry name" value="tRNAsynth_Ia_anticodon-bd"/>
</dbReference>
<dbReference type="NCBIfam" id="TIGR00398">
    <property type="entry name" value="metG"/>
    <property type="match status" value="1"/>
</dbReference>
<dbReference type="NCBIfam" id="TIGR00399">
    <property type="entry name" value="metG_C_term"/>
    <property type="match status" value="1"/>
</dbReference>
<dbReference type="NCBIfam" id="NF008900">
    <property type="entry name" value="PRK12267.1"/>
    <property type="match status" value="1"/>
</dbReference>
<dbReference type="PANTHER" id="PTHR43326:SF1">
    <property type="entry name" value="METHIONINE--TRNA LIGASE, MITOCHONDRIAL"/>
    <property type="match status" value="1"/>
</dbReference>
<dbReference type="PANTHER" id="PTHR43326">
    <property type="entry name" value="METHIONYL-TRNA SYNTHETASE"/>
    <property type="match status" value="1"/>
</dbReference>
<dbReference type="Pfam" id="PF19303">
    <property type="entry name" value="Anticodon_3"/>
    <property type="match status" value="1"/>
</dbReference>
<dbReference type="Pfam" id="PF01406">
    <property type="entry name" value="tRNA-synt_1e"/>
    <property type="match status" value="1"/>
</dbReference>
<dbReference type="Pfam" id="PF09334">
    <property type="entry name" value="tRNA-synt_1g"/>
    <property type="match status" value="1"/>
</dbReference>
<dbReference type="Pfam" id="PF01588">
    <property type="entry name" value="tRNA_bind"/>
    <property type="match status" value="1"/>
</dbReference>
<dbReference type="PRINTS" id="PR01041">
    <property type="entry name" value="TRNASYNTHMET"/>
</dbReference>
<dbReference type="SUPFAM" id="SSF47323">
    <property type="entry name" value="Anticodon-binding domain of a subclass of class I aminoacyl-tRNA synthetases"/>
    <property type="match status" value="1"/>
</dbReference>
<dbReference type="SUPFAM" id="SSF50249">
    <property type="entry name" value="Nucleic acid-binding proteins"/>
    <property type="match status" value="1"/>
</dbReference>
<dbReference type="SUPFAM" id="SSF52374">
    <property type="entry name" value="Nucleotidylyl transferase"/>
    <property type="match status" value="1"/>
</dbReference>
<dbReference type="PROSITE" id="PS50886">
    <property type="entry name" value="TRBD"/>
    <property type="match status" value="1"/>
</dbReference>
<protein>
    <recommendedName>
        <fullName>Methionine--tRNA ligase</fullName>
        <ecNumber>6.1.1.10</ecNumber>
    </recommendedName>
    <alternativeName>
        <fullName>Methionyl-tRNA synthetase</fullName>
        <shortName>MetRS</shortName>
    </alternativeName>
</protein>
<evidence type="ECO:0000250" key="1"/>
<evidence type="ECO:0000305" key="2"/>